<organism>
    <name type="scientific">Homo sapiens</name>
    <name type="common">Human</name>
    <dbReference type="NCBI Taxonomy" id="9606"/>
    <lineage>
        <taxon>Eukaryota</taxon>
        <taxon>Metazoa</taxon>
        <taxon>Chordata</taxon>
        <taxon>Craniata</taxon>
        <taxon>Vertebrata</taxon>
        <taxon>Euteleostomi</taxon>
        <taxon>Mammalia</taxon>
        <taxon>Eutheria</taxon>
        <taxon>Euarchontoglires</taxon>
        <taxon>Primates</taxon>
        <taxon>Haplorrhini</taxon>
        <taxon>Catarrhini</taxon>
        <taxon>Hominidae</taxon>
        <taxon>Homo</taxon>
    </lineage>
</organism>
<comment type="function">
    <text>Component of the Mediator complex, a coactivator involved in the regulated transcription of nearly all RNA polymerase II-dependent genes. Mediator functions as a bridge to convey information from gene-specific regulatory proteins to the basal RNA polymerase II transcription machinery. Mediator is recruited to promoters by direct interactions with regulatory proteins and serves as a scaffold for the assembly of a functional preinitiation complex with RNA polymerase II and the general transcription factors. May play a role as a target recruitment subunit in E3 ubiquitin-protein ligase complexes and thus in ubiquitination and subsequent proteasomal degradation of target proteins.</text>
</comment>
<comment type="pathway">
    <text>Protein modification; protein ubiquitination.</text>
</comment>
<comment type="subunit">
    <text evidence="3 4 5 6">Component of the Mediator complex, which is composed of MED1, MED4, MED6, MED7, MED8, MED9, MED10, MED11, MED12, MED13, MED13L, MED14, MED15, MED16, MED17, MED18, MED19, MED20, MED21, MED22, MED23, MED24, MED25, MED26, MED27, MED29, MED30, MED31, CCNC, CDK8 and CDC2L6/CDK11. The MED12, MED13, CCNC and CDK8 subunits form a distinct module termed the CDK8 module. Mediator containing the CDK8 module is less active than Mediator lacking this module in supporting transcriptional activation. Individual preparations of the Mediator complex lacking one or more distinct subunits have been variously termed ARC, CRSP, DRIP, PC2, SMCC and TRAP. May be part of a multisubunit E3 ubiquitin-protein ligase complex with the elongin BC complex (ELOB and ELOC), CUL2 and RBX1.</text>
</comment>
<comment type="interaction">
    <interactant intactId="EBI-394405">
        <id>Q96G25</id>
    </interactant>
    <interactant intactId="EBI-301238">
        <id>Q15370</id>
        <label>ELOB</label>
    </interactant>
    <organismsDiffer>false</organismsDiffer>
    <experiments>5</experiments>
</comment>
<comment type="interaction">
    <interactant intactId="EBI-394405">
        <id>Q96G25</id>
    </interactant>
    <interactant intactId="EBI-301231">
        <id>Q15369</id>
        <label>ELOC</label>
    </interactant>
    <organismsDiffer>false</organismsDiffer>
    <experiments>3</experiments>
</comment>
<comment type="interaction">
    <interactant intactId="EBI-394405">
        <id>Q96G25</id>
    </interactant>
    <interactant intactId="EBI-394704">
        <id>Q9P086</id>
        <label>MED11</label>
    </interactant>
    <organismsDiffer>false</organismsDiffer>
    <experiments>2</experiments>
</comment>
<comment type="interaction">
    <interactant intactId="EBI-10286267">
        <id>Q96G25-2</id>
    </interactant>
    <interactant intactId="EBI-10171697">
        <id>Q6A162</id>
        <label>KRT40</label>
    </interactant>
    <organismsDiffer>false</organismsDiffer>
    <experiments>3</experiments>
</comment>
<comment type="interaction">
    <interactant intactId="EBI-10286267">
        <id>Q96G25-2</id>
    </interactant>
    <interactant intactId="EBI-302345">
        <id>Q8ND90</id>
        <label>PNMA1</label>
    </interactant>
    <organismsDiffer>false</organismsDiffer>
    <experiments>3</experiments>
</comment>
<comment type="interaction">
    <interactant intactId="EBI-10286267">
        <id>Q96G25-2</id>
    </interactant>
    <interactant intactId="EBI-2805516">
        <id>P31321</id>
        <label>PRKAR1B</label>
    </interactant>
    <organismsDiffer>false</organismsDiffer>
    <experiments>3</experiments>
</comment>
<comment type="subcellular location">
    <subcellularLocation>
        <location evidence="8">Nucleus</location>
    </subcellularLocation>
</comment>
<comment type="alternative products">
    <event type="alternative splicing"/>
    <isoform>
        <id>Q96G25-1</id>
        <name>1</name>
        <sequence type="displayed"/>
    </isoform>
    <isoform>
        <id>Q96G25-2</id>
        <name>2</name>
        <sequence type="described" ref="VSP_007524"/>
    </isoform>
    <isoform>
        <id>Q96G25-3</id>
        <name>3</name>
        <sequence type="described" ref="VSP_035507"/>
    </isoform>
</comment>
<comment type="domain">
    <text>The elongin BC complex binding domain is also known as BC-box with the consensus [APST]-L-x(3)-C-x(3)-[AILV].</text>
</comment>
<comment type="similarity">
    <text evidence="8">Belongs to the Mediator complex subunit 8 family.</text>
</comment>
<comment type="sequence caution" evidence="8">
    <conflict type="frameshift">
        <sequence resource="EMBL" id="BG722466"/>
    </conflict>
</comment>
<reference key="1">
    <citation type="journal article" date="2002" name="Proc. Natl. Acad. Sci. U.S.A.">
        <title>Mammalian mediator subunit mMED8 is an Elongin BC-interacting protein that can assemble with Cul2 and Rbx1 to reconstitute a ubiquitin ligase.</title>
        <authorList>
            <person name="Brower C.S."/>
            <person name="Sato S."/>
            <person name="Tomomori-Sato C."/>
            <person name="Kamura T."/>
            <person name="Pause A."/>
            <person name="Stearman R."/>
            <person name="Klausner R.D."/>
            <person name="Malik S."/>
            <person name="Lane W.S."/>
            <person name="Sorokina I."/>
            <person name="Roeder R.G."/>
            <person name="Conaway J.W."/>
            <person name="Conaway R.C."/>
        </authorList>
    </citation>
    <scope>NUCLEOTIDE SEQUENCE [MRNA] (ISOFORM 1)</scope>
    <scope>IDENTIFICATION IN AN E3 UBIQUITIN LIGASE COMPLEX</scope>
    <scope>INTERACTION WITH MED10</scope>
    <scope>MUTAGENESIS OF LEU-143 AND CYS-147</scope>
</reference>
<reference key="2">
    <citation type="journal article" date="2006" name="Nature">
        <title>The DNA sequence and biological annotation of human chromosome 1.</title>
        <authorList>
            <person name="Gregory S.G."/>
            <person name="Barlow K.F."/>
            <person name="McLay K.E."/>
            <person name="Kaul R."/>
            <person name="Swarbreck D."/>
            <person name="Dunham A."/>
            <person name="Scott C.E."/>
            <person name="Howe K.L."/>
            <person name="Woodfine K."/>
            <person name="Spencer C.C.A."/>
            <person name="Jones M.C."/>
            <person name="Gillson C."/>
            <person name="Searle S."/>
            <person name="Zhou Y."/>
            <person name="Kokocinski F."/>
            <person name="McDonald L."/>
            <person name="Evans R."/>
            <person name="Phillips K."/>
            <person name="Atkinson A."/>
            <person name="Cooper R."/>
            <person name="Jones C."/>
            <person name="Hall R.E."/>
            <person name="Andrews T.D."/>
            <person name="Lloyd C."/>
            <person name="Ainscough R."/>
            <person name="Almeida J.P."/>
            <person name="Ambrose K.D."/>
            <person name="Anderson F."/>
            <person name="Andrew R.W."/>
            <person name="Ashwell R.I.S."/>
            <person name="Aubin K."/>
            <person name="Babbage A.K."/>
            <person name="Bagguley C.L."/>
            <person name="Bailey J."/>
            <person name="Beasley H."/>
            <person name="Bethel G."/>
            <person name="Bird C.P."/>
            <person name="Bray-Allen S."/>
            <person name="Brown J.Y."/>
            <person name="Brown A.J."/>
            <person name="Buckley D."/>
            <person name="Burton J."/>
            <person name="Bye J."/>
            <person name="Carder C."/>
            <person name="Chapman J.C."/>
            <person name="Clark S.Y."/>
            <person name="Clarke G."/>
            <person name="Clee C."/>
            <person name="Cobley V."/>
            <person name="Collier R.E."/>
            <person name="Corby N."/>
            <person name="Coville G.J."/>
            <person name="Davies J."/>
            <person name="Deadman R."/>
            <person name="Dunn M."/>
            <person name="Earthrowl M."/>
            <person name="Ellington A.G."/>
            <person name="Errington H."/>
            <person name="Frankish A."/>
            <person name="Frankland J."/>
            <person name="French L."/>
            <person name="Garner P."/>
            <person name="Garnett J."/>
            <person name="Gay L."/>
            <person name="Ghori M.R.J."/>
            <person name="Gibson R."/>
            <person name="Gilby L.M."/>
            <person name="Gillett W."/>
            <person name="Glithero R.J."/>
            <person name="Grafham D.V."/>
            <person name="Griffiths C."/>
            <person name="Griffiths-Jones S."/>
            <person name="Grocock R."/>
            <person name="Hammond S."/>
            <person name="Harrison E.S.I."/>
            <person name="Hart E."/>
            <person name="Haugen E."/>
            <person name="Heath P.D."/>
            <person name="Holmes S."/>
            <person name="Holt K."/>
            <person name="Howden P.J."/>
            <person name="Hunt A.R."/>
            <person name="Hunt S.E."/>
            <person name="Hunter G."/>
            <person name="Isherwood J."/>
            <person name="James R."/>
            <person name="Johnson C."/>
            <person name="Johnson D."/>
            <person name="Joy A."/>
            <person name="Kay M."/>
            <person name="Kershaw J.K."/>
            <person name="Kibukawa M."/>
            <person name="Kimberley A.M."/>
            <person name="King A."/>
            <person name="Knights A.J."/>
            <person name="Lad H."/>
            <person name="Laird G."/>
            <person name="Lawlor S."/>
            <person name="Leongamornlert D.A."/>
            <person name="Lloyd D.M."/>
            <person name="Loveland J."/>
            <person name="Lovell J."/>
            <person name="Lush M.J."/>
            <person name="Lyne R."/>
            <person name="Martin S."/>
            <person name="Mashreghi-Mohammadi M."/>
            <person name="Matthews L."/>
            <person name="Matthews N.S.W."/>
            <person name="McLaren S."/>
            <person name="Milne S."/>
            <person name="Mistry S."/>
            <person name="Moore M.J.F."/>
            <person name="Nickerson T."/>
            <person name="O'Dell C.N."/>
            <person name="Oliver K."/>
            <person name="Palmeiri A."/>
            <person name="Palmer S.A."/>
            <person name="Parker A."/>
            <person name="Patel D."/>
            <person name="Pearce A.V."/>
            <person name="Peck A.I."/>
            <person name="Pelan S."/>
            <person name="Phelps K."/>
            <person name="Phillimore B.J."/>
            <person name="Plumb R."/>
            <person name="Rajan J."/>
            <person name="Raymond C."/>
            <person name="Rouse G."/>
            <person name="Saenphimmachak C."/>
            <person name="Sehra H.K."/>
            <person name="Sheridan E."/>
            <person name="Shownkeen R."/>
            <person name="Sims S."/>
            <person name="Skuce C.D."/>
            <person name="Smith M."/>
            <person name="Steward C."/>
            <person name="Subramanian S."/>
            <person name="Sycamore N."/>
            <person name="Tracey A."/>
            <person name="Tromans A."/>
            <person name="Van Helmond Z."/>
            <person name="Wall M."/>
            <person name="Wallis J.M."/>
            <person name="White S."/>
            <person name="Whitehead S.L."/>
            <person name="Wilkinson J.E."/>
            <person name="Willey D.L."/>
            <person name="Williams H."/>
            <person name="Wilming L."/>
            <person name="Wray P.W."/>
            <person name="Wu Z."/>
            <person name="Coulson A."/>
            <person name="Vaudin M."/>
            <person name="Sulston J.E."/>
            <person name="Durbin R.M."/>
            <person name="Hubbard T."/>
            <person name="Wooster R."/>
            <person name="Dunham I."/>
            <person name="Carter N.P."/>
            <person name="McVean G."/>
            <person name="Ross M.T."/>
            <person name="Harrow J."/>
            <person name="Olson M.V."/>
            <person name="Beck S."/>
            <person name="Rogers J."/>
            <person name="Bentley D.R."/>
        </authorList>
    </citation>
    <scope>NUCLEOTIDE SEQUENCE [LARGE SCALE GENOMIC DNA]</scope>
</reference>
<reference key="3">
    <citation type="journal article" date="2004" name="Genome Res.">
        <title>The status, quality, and expansion of the NIH full-length cDNA project: the Mammalian Gene Collection (MGC).</title>
        <authorList>
            <consortium name="The MGC Project Team"/>
        </authorList>
    </citation>
    <scope>NUCLEOTIDE SEQUENCE [LARGE SCALE MRNA] (ISOFORM 3)</scope>
    <scope>NUCLEOTIDE SEQUENCE [LARGE SCALE MRNA] OF 1-259 (ISOFORM 1)</scope>
    <scope>NUCLEOTIDE SEQUENCE [LARGE SCALE MRNA] OF 5-268 (ISOFORM 2)</scope>
    <source>
        <tissue>Cervix carcinoma</tissue>
        <tissue>Melanoma</tissue>
        <tissue>Testis</tissue>
    </source>
</reference>
<reference key="4">
    <citation type="journal article" date="1999" name="Nature">
        <title>Composite co-activator ARC mediates chromatin-directed transcriptional activation.</title>
        <authorList>
            <person name="Naeaer A.M."/>
            <person name="Beaurang P.A."/>
            <person name="Zhou S."/>
            <person name="Abraham S."/>
            <person name="Solomon W.B."/>
            <person name="Tjian R."/>
        </authorList>
    </citation>
    <scope>IDENTIFICATION IN THE ARC COMPLEX</scope>
    <scope>PROTEIN SEQUENCE OF 72-83 AND 189-200</scope>
</reference>
<reference key="5">
    <citation type="journal article" date="2003" name="J. Biol. Chem.">
        <title>Identification of mammalian Mediator subunits with similarities to yeast Mediator subunits Srb5, Srb6, Med11, and Rox3.</title>
        <authorList>
            <person name="Sato S."/>
            <person name="Tomomori-Sato C."/>
            <person name="Banks C.A.S."/>
            <person name="Sorokina I."/>
            <person name="Parmely T.J."/>
            <person name="Kong S.E."/>
            <person name="Jin J."/>
            <person name="Cai Y."/>
            <person name="Lane W.S."/>
            <person name="Brower C.S."/>
            <person name="Conaway R.C."/>
            <person name="Conaway J.W."/>
        </authorList>
    </citation>
    <scope>INTERACTION WITH MED10</scope>
</reference>
<reference key="6">
    <citation type="journal article" date="2004" name="Mol. Cell">
        <title>A set of consensus mammalian mediator subunits identified by multidimensional protein identification technology.</title>
        <authorList>
            <person name="Sato S."/>
            <person name="Tomomori-Sato C."/>
            <person name="Parmely T.J."/>
            <person name="Florens L."/>
            <person name="Zybailov B."/>
            <person name="Swanson S.K."/>
            <person name="Banks C.A.S."/>
            <person name="Jin J."/>
            <person name="Cai Y."/>
            <person name="Washburn M.P."/>
            <person name="Conaway J.W."/>
            <person name="Conaway R.C."/>
        </authorList>
    </citation>
    <scope>IDENTIFICATION BY MASS SPECTROMETRY</scope>
    <scope>IDENTIFICATION IN THE MEDIATOR COMPLEX</scope>
</reference>
<reference key="7">
    <citation type="journal article" date="2005" name="Mol. Cell">
        <title>MED1/TRAP220 exists predominantly in a TRAP/Mediator subpopulation enriched in RNA polymerase II and is required for ER-mediated transcription.</title>
        <authorList>
            <person name="Zhang X."/>
            <person name="Krutchinsky A."/>
            <person name="Fukuda A."/>
            <person name="Chen W."/>
            <person name="Yamamura S."/>
            <person name="Chait B.T."/>
            <person name="Roeder R.G."/>
        </authorList>
    </citation>
    <scope>IDENTIFICATION BY MASS SPECTROMETRY</scope>
    <scope>IDENTIFICATION IN THE MEDIATOR COMPLEX</scope>
    <scope>ASSOCIATION OF THE MEDIATOR COMPLEX WITH RNA POLYMERASE II</scope>
</reference>
<reference key="8">
    <citation type="journal article" date="2009" name="Mol. Cell. Proteomics">
        <title>Large-scale proteomics analysis of the human kinome.</title>
        <authorList>
            <person name="Oppermann F.S."/>
            <person name="Gnad F."/>
            <person name="Olsen J.V."/>
            <person name="Hornberger R."/>
            <person name="Greff Z."/>
            <person name="Keri G."/>
            <person name="Mann M."/>
            <person name="Daub H."/>
        </authorList>
    </citation>
    <scope>PHOSPHORYLATION [LARGE SCALE ANALYSIS] AT SER-82</scope>
    <scope>IDENTIFICATION BY MASS SPECTROMETRY [LARGE SCALE ANALYSIS]</scope>
</reference>
<reference key="9">
    <citation type="journal article" date="2011" name="BMC Syst. Biol.">
        <title>Initial characterization of the human central proteome.</title>
        <authorList>
            <person name="Burkard T.R."/>
            <person name="Planyavsky M."/>
            <person name="Kaupe I."/>
            <person name="Breitwieser F.P."/>
            <person name="Buerckstuemmer T."/>
            <person name="Bennett K.L."/>
            <person name="Superti-Furga G."/>
            <person name="Colinge J."/>
        </authorList>
    </citation>
    <scope>IDENTIFICATION BY MASS SPECTROMETRY [LARGE SCALE ANALYSIS]</scope>
</reference>
<reference key="10">
    <citation type="journal article" date="2014" name="J. Proteomics">
        <title>An enzyme assisted RP-RPLC approach for in-depth analysis of human liver phosphoproteome.</title>
        <authorList>
            <person name="Bian Y."/>
            <person name="Song C."/>
            <person name="Cheng K."/>
            <person name="Dong M."/>
            <person name="Wang F."/>
            <person name="Huang J."/>
            <person name="Sun D."/>
            <person name="Wang L."/>
            <person name="Ye M."/>
            <person name="Zou H."/>
        </authorList>
    </citation>
    <scope>PHOSPHORYLATION [LARGE SCALE ANALYSIS] AT SER-82</scope>
    <scope>IDENTIFICATION BY MASS SPECTROMETRY [LARGE SCALE ANALYSIS]</scope>
    <source>
        <tissue>Liver</tissue>
    </source>
</reference>
<sequence>MQREEKQLEASLDALLSQVADLKNSLGSFICKLENEYGRLTWPSVLDSFALLSGQLNTLNKVLKHEKTPLFRNQVIIPLVLSPDRDEDLMRQTEGRVPVFSHEVVPDHLRTKPDPEVEEQEKQLTTDAARIGADAAQKQIQSLNKMCSNLLEKISKEERESESGGLRPNKQTFNPTDTNALVAAVAFGKGLSNWRPSGSSGPGQAGQPGAGTILAGTSGLQQVQMAGAPSQQQPMLSGVQMAQAGQPGKMPSGIKTNIKSASMHPYQR</sequence>
<evidence type="ECO:0000255" key="1"/>
<evidence type="ECO:0000256" key="2">
    <source>
        <dbReference type="SAM" id="MobiDB-lite"/>
    </source>
</evidence>
<evidence type="ECO:0000269" key="3">
    <source>
    </source>
</evidence>
<evidence type="ECO:0000269" key="4">
    <source>
    </source>
</evidence>
<evidence type="ECO:0000269" key="5">
    <source>
    </source>
</evidence>
<evidence type="ECO:0000269" key="6">
    <source>
    </source>
</evidence>
<evidence type="ECO:0000303" key="7">
    <source>
    </source>
</evidence>
<evidence type="ECO:0000305" key="8"/>
<evidence type="ECO:0007744" key="9">
    <source>
    </source>
</evidence>
<evidence type="ECO:0007744" key="10">
    <source>
    </source>
</evidence>
<evidence type="ECO:0007829" key="11">
    <source>
        <dbReference type="PDB" id="7EMF"/>
    </source>
</evidence>
<accession>Q96G25</accession>
<accession>A9IZ91</accession>
<accession>A9IZ92</accession>
<accession>Q5JUY8</accession>
<accession>Q96FQ4</accession>
<keyword id="KW-0002">3D-structure</keyword>
<keyword id="KW-0010">Activator</keyword>
<keyword id="KW-0025">Alternative splicing</keyword>
<keyword id="KW-0175">Coiled coil</keyword>
<keyword id="KW-0903">Direct protein sequencing</keyword>
<keyword id="KW-0539">Nucleus</keyword>
<keyword id="KW-0597">Phosphoprotein</keyword>
<keyword id="KW-1267">Proteomics identification</keyword>
<keyword id="KW-1185">Reference proteome</keyword>
<keyword id="KW-0804">Transcription</keyword>
<keyword id="KW-0805">Transcription regulation</keyword>
<keyword id="KW-0833">Ubl conjugation pathway</keyword>
<feature type="chain" id="PRO_0000096394" description="Mediator of RNA polymerase II transcription subunit 8">
    <location>
        <begin position="1"/>
        <end position="268"/>
    </location>
</feature>
<feature type="region of interest" description="Interaction with the Elongin BC complex">
    <location>
        <begin position="142"/>
        <end position="151"/>
    </location>
</feature>
<feature type="region of interest" description="Disordered" evidence="2">
    <location>
        <begin position="156"/>
        <end position="176"/>
    </location>
</feature>
<feature type="region of interest" description="Disordered" evidence="2">
    <location>
        <begin position="193"/>
        <end position="268"/>
    </location>
</feature>
<feature type="coiled-coil region" evidence="1">
    <location>
        <begin position="1"/>
        <end position="28"/>
    </location>
</feature>
<feature type="coiled-coil region" evidence="1">
    <location>
        <begin position="133"/>
        <end position="163"/>
    </location>
</feature>
<feature type="compositionally biased region" description="Gly residues" evidence="2">
    <location>
        <begin position="200"/>
        <end position="209"/>
    </location>
</feature>
<feature type="compositionally biased region" description="Polar residues" evidence="2">
    <location>
        <begin position="218"/>
        <end position="235"/>
    </location>
</feature>
<feature type="modified residue" description="Phosphoserine" evidence="9 10">
    <location>
        <position position="82"/>
    </location>
</feature>
<feature type="splice variant" id="VSP_035507" description="In isoform 3." evidence="7">
    <location>
        <begin position="1"/>
        <end position="89"/>
    </location>
</feature>
<feature type="splice variant" id="VSP_007524" description="In isoform 2." evidence="7">
    <original>R</original>
    <variation>RPSCLGFILAIPLRRKVKKLLGQEGKKNAHLQLW</variation>
    <location>
        <position position="268"/>
    </location>
</feature>
<feature type="mutagenesis site" description="Impairs interaction with the Elongin BC complex; when associated with F-147." evidence="4">
    <original>L</original>
    <variation>P</variation>
    <location>
        <position position="143"/>
    </location>
</feature>
<feature type="mutagenesis site" description="Impairs interaction with the Elongin BC complex; when associated with P-143." evidence="4">
    <original>C</original>
    <variation>F</variation>
    <location>
        <position position="147"/>
    </location>
</feature>
<feature type="sequence conflict" description="In Ref. 3; BG722466." evidence="8" ref="3">
    <original>N</original>
    <variation>K</variation>
    <location>
        <position position="257"/>
    </location>
</feature>
<feature type="helix" evidence="11">
    <location>
        <begin position="4"/>
        <end position="35"/>
    </location>
</feature>
<feature type="helix" evidence="11">
    <location>
        <begin position="42"/>
        <end position="65"/>
    </location>
</feature>
<feature type="turn" evidence="11">
    <location>
        <begin position="71"/>
        <end position="73"/>
    </location>
</feature>
<feature type="strand" evidence="11">
    <location>
        <begin position="74"/>
        <end position="77"/>
    </location>
</feature>
<feature type="helix" evidence="11">
    <location>
        <begin position="87"/>
        <end position="93"/>
    </location>
</feature>
<feature type="helix" evidence="11">
    <location>
        <begin position="104"/>
        <end position="108"/>
    </location>
</feature>
<feature type="helix" evidence="11">
    <location>
        <begin position="115"/>
        <end position="128"/>
    </location>
</feature>
<feature type="helix" evidence="11">
    <location>
        <begin position="135"/>
        <end position="157"/>
    </location>
</feature>
<feature type="helix" evidence="11">
    <location>
        <begin position="175"/>
        <end position="186"/>
    </location>
</feature>
<feature type="turn" evidence="11">
    <location>
        <begin position="189"/>
        <end position="191"/>
    </location>
</feature>
<protein>
    <recommendedName>
        <fullName>Mediator of RNA polymerase II transcription subunit 8</fullName>
    </recommendedName>
    <alternativeName>
        <fullName>Activator-recruited cofactor 32 kDa component</fullName>
        <shortName>ARC32</shortName>
    </alternativeName>
    <alternativeName>
        <fullName>Mediator complex subunit 8</fullName>
    </alternativeName>
</protein>
<name>MED8_HUMAN</name>
<proteinExistence type="evidence at protein level"/>
<dbReference type="EMBL" id="AF521562">
    <property type="protein sequence ID" value="AAM76709.1"/>
    <property type="molecule type" value="mRNA"/>
</dbReference>
<dbReference type="EMBL" id="AL139289">
    <property type="status" value="NOT_ANNOTATED_CDS"/>
    <property type="molecule type" value="Genomic_DNA"/>
</dbReference>
<dbReference type="EMBL" id="BC010019">
    <property type="protein sequence ID" value="AAH10019.3"/>
    <property type="molecule type" value="mRNA"/>
</dbReference>
<dbReference type="EMBL" id="BC010543">
    <property type="protein sequence ID" value="AAH10543.2"/>
    <property type="molecule type" value="mRNA"/>
</dbReference>
<dbReference type="EMBL" id="BG722466">
    <property type="status" value="NOT_ANNOTATED_CDS"/>
    <property type="molecule type" value="mRNA"/>
</dbReference>
<dbReference type="CCDS" id="CCDS486.2">
    <molecule id="Q96G25-2"/>
</dbReference>
<dbReference type="CCDS" id="CCDS487.2">
    <molecule id="Q96G25-1"/>
</dbReference>
<dbReference type="CCDS" id="CCDS60108.1">
    <molecule id="Q96G25-3"/>
</dbReference>
<dbReference type="RefSeq" id="NP_001001653.1">
    <molecule id="Q96G25-3"/>
    <property type="nucleotide sequence ID" value="NM_001001653.3"/>
</dbReference>
<dbReference type="RefSeq" id="NP_443109.2">
    <molecule id="Q96G25-2"/>
    <property type="nucleotide sequence ID" value="NM_052877.5"/>
</dbReference>
<dbReference type="RefSeq" id="NP_963836.2">
    <molecule id="Q96G25-1"/>
    <property type="nucleotide sequence ID" value="NM_201542.5"/>
</dbReference>
<dbReference type="PDB" id="7EMF">
    <property type="method" value="EM"/>
    <property type="resolution" value="3.50 A"/>
    <property type="chains" value="H=1-268"/>
</dbReference>
<dbReference type="PDB" id="7ENA">
    <property type="method" value="EM"/>
    <property type="resolution" value="4.07 A"/>
    <property type="chains" value="h=1-268"/>
</dbReference>
<dbReference type="PDB" id="7ENC">
    <property type="method" value="EM"/>
    <property type="resolution" value="4.13 A"/>
    <property type="chains" value="h=1-268"/>
</dbReference>
<dbReference type="PDB" id="7ENJ">
    <property type="method" value="EM"/>
    <property type="resolution" value="4.40 A"/>
    <property type="chains" value="H=1-268"/>
</dbReference>
<dbReference type="PDB" id="7LBM">
    <property type="method" value="EM"/>
    <property type="resolution" value="4.80 A"/>
    <property type="chains" value="h=1-268"/>
</dbReference>
<dbReference type="PDB" id="7NVR">
    <property type="method" value="EM"/>
    <property type="resolution" value="4.50 A"/>
    <property type="chains" value="b=1-268"/>
</dbReference>
<dbReference type="PDB" id="8GXQ">
    <property type="method" value="EM"/>
    <property type="resolution" value="5.04 A"/>
    <property type="chains" value="h=1-268"/>
</dbReference>
<dbReference type="PDB" id="8GXS">
    <property type="method" value="EM"/>
    <property type="resolution" value="4.16 A"/>
    <property type="chains" value="h=1-268"/>
</dbReference>
<dbReference type="PDB" id="8T9D">
    <property type="method" value="EM"/>
    <property type="resolution" value="4.66 A"/>
    <property type="chains" value="E=1-268"/>
</dbReference>
<dbReference type="PDB" id="8TQW">
    <property type="method" value="EM"/>
    <property type="resolution" value="8.20 A"/>
    <property type="chains" value="H=1-268"/>
</dbReference>
<dbReference type="PDB" id="8TRH">
    <property type="method" value="EM"/>
    <property type="resolution" value="3.70 A"/>
    <property type="chains" value="H=1-268"/>
</dbReference>
<dbReference type="PDBsum" id="7EMF"/>
<dbReference type="PDBsum" id="7ENA"/>
<dbReference type="PDBsum" id="7ENC"/>
<dbReference type="PDBsum" id="7ENJ"/>
<dbReference type="PDBsum" id="7LBM"/>
<dbReference type="PDBsum" id="7NVR"/>
<dbReference type="PDBsum" id="8GXQ"/>
<dbReference type="PDBsum" id="8GXS"/>
<dbReference type="PDBsum" id="8T9D"/>
<dbReference type="PDBsum" id="8TQW"/>
<dbReference type="PDBsum" id="8TRH"/>
<dbReference type="EMDB" id="EMD-12610"/>
<dbReference type="EMDB" id="EMD-23255"/>
<dbReference type="EMDB" id="EMD-31191"/>
<dbReference type="EMDB" id="EMD-31204"/>
<dbReference type="EMDB" id="EMD-31207"/>
<dbReference type="EMDB" id="EMD-31211"/>
<dbReference type="EMDB" id="EMD-34359"/>
<dbReference type="EMDB" id="EMD-34360"/>
<dbReference type="EMDB" id="EMD-41107"/>
<dbReference type="EMDB" id="EMD-41565"/>
<dbReference type="EMDB" id="EMD-41580"/>
<dbReference type="SMR" id="Q96G25"/>
<dbReference type="BioGRID" id="125219">
    <property type="interactions" value="120"/>
</dbReference>
<dbReference type="ComplexPortal" id="CPX-3227">
    <property type="entry name" value="Core mediator complex"/>
</dbReference>
<dbReference type="CORUM" id="Q96G25"/>
<dbReference type="FunCoup" id="Q96G25">
    <property type="interactions" value="3753"/>
</dbReference>
<dbReference type="IntAct" id="Q96G25">
    <property type="interactions" value="77"/>
</dbReference>
<dbReference type="MINT" id="Q96G25"/>
<dbReference type="STRING" id="9606.ENSP00000290663"/>
<dbReference type="GlyGen" id="Q96G25">
    <property type="glycosylation" value="1 site, 1 O-linked glycan (1 site)"/>
</dbReference>
<dbReference type="iPTMnet" id="Q96G25"/>
<dbReference type="PhosphoSitePlus" id="Q96G25"/>
<dbReference type="BioMuta" id="MED8"/>
<dbReference type="DMDM" id="31076772"/>
<dbReference type="jPOST" id="Q96G25"/>
<dbReference type="MassIVE" id="Q96G25"/>
<dbReference type="PaxDb" id="9606-ENSP00000290663"/>
<dbReference type="PeptideAtlas" id="Q96G25"/>
<dbReference type="ProteomicsDB" id="76585">
    <molecule id="Q96G25-1"/>
</dbReference>
<dbReference type="ProteomicsDB" id="76586">
    <molecule id="Q96G25-2"/>
</dbReference>
<dbReference type="ProteomicsDB" id="76587">
    <molecule id="Q96G25-3"/>
</dbReference>
<dbReference type="Pumba" id="Q96G25"/>
<dbReference type="Antibodypedia" id="32328">
    <property type="antibodies" value="173 antibodies from 28 providers"/>
</dbReference>
<dbReference type="DNASU" id="112950"/>
<dbReference type="Ensembl" id="ENST00000290663.10">
    <molecule id="Q96G25-2"/>
    <property type="protein sequence ID" value="ENSP00000290663.6"/>
    <property type="gene ID" value="ENSG00000159479.17"/>
</dbReference>
<dbReference type="Ensembl" id="ENST00000372455.4">
    <molecule id="Q96G25-3"/>
    <property type="protein sequence ID" value="ENSP00000361533.4"/>
    <property type="gene ID" value="ENSG00000159479.17"/>
</dbReference>
<dbReference type="Ensembl" id="ENST00000372457.9">
    <molecule id="Q96G25-1"/>
    <property type="protein sequence ID" value="ENSP00000361535.4"/>
    <property type="gene ID" value="ENSG00000159479.17"/>
</dbReference>
<dbReference type="GeneID" id="112950"/>
<dbReference type="KEGG" id="hsa:112950"/>
<dbReference type="MANE-Select" id="ENST00000372457.9">
    <property type="protein sequence ID" value="ENSP00000361535.4"/>
    <property type="RefSeq nucleotide sequence ID" value="NM_201542.5"/>
    <property type="RefSeq protein sequence ID" value="NP_963836.2"/>
</dbReference>
<dbReference type="UCSC" id="uc001cje.3">
    <molecule id="Q96G25-1"/>
    <property type="organism name" value="human"/>
</dbReference>
<dbReference type="AGR" id="HGNC:19971"/>
<dbReference type="CTD" id="112950"/>
<dbReference type="DisGeNET" id="112950"/>
<dbReference type="GeneCards" id="MED8"/>
<dbReference type="HGNC" id="HGNC:19971">
    <property type="gene designation" value="MED8"/>
</dbReference>
<dbReference type="HPA" id="ENSG00000159479">
    <property type="expression patterns" value="Low tissue specificity"/>
</dbReference>
<dbReference type="MIM" id="607956">
    <property type="type" value="gene"/>
</dbReference>
<dbReference type="neXtProt" id="NX_Q96G25"/>
<dbReference type="OpenTargets" id="ENSG00000159479"/>
<dbReference type="PharmGKB" id="PA134893073"/>
<dbReference type="VEuPathDB" id="HostDB:ENSG00000159479"/>
<dbReference type="eggNOG" id="KOG3583">
    <property type="taxonomic scope" value="Eukaryota"/>
</dbReference>
<dbReference type="GeneTree" id="ENSGT00390000011838"/>
<dbReference type="HOGENOM" id="CLU_085476_0_0_1"/>
<dbReference type="InParanoid" id="Q96G25"/>
<dbReference type="OMA" id="FKLEHEY"/>
<dbReference type="OrthoDB" id="150687at2759"/>
<dbReference type="PAN-GO" id="Q96G25">
    <property type="GO annotations" value="5 GO annotations based on evolutionary models"/>
</dbReference>
<dbReference type="PhylomeDB" id="Q96G25"/>
<dbReference type="TreeFam" id="TF316778"/>
<dbReference type="PathwayCommons" id="Q96G25"/>
<dbReference type="Reactome" id="R-HSA-1989781">
    <property type="pathway name" value="PPARA activates gene expression"/>
</dbReference>
<dbReference type="Reactome" id="R-HSA-212436">
    <property type="pathway name" value="Generic Transcription Pathway"/>
</dbReference>
<dbReference type="Reactome" id="R-HSA-381340">
    <property type="pathway name" value="Transcriptional regulation of white adipocyte differentiation"/>
</dbReference>
<dbReference type="Reactome" id="R-HSA-9833110">
    <property type="pathway name" value="RSV-host interactions"/>
</dbReference>
<dbReference type="SignaLink" id="Q96G25"/>
<dbReference type="SIGNOR" id="Q96G25"/>
<dbReference type="UniPathway" id="UPA00143"/>
<dbReference type="BioGRID-ORCS" id="112950">
    <property type="hits" value="582 hits in 1196 CRISPR screens"/>
</dbReference>
<dbReference type="ChiTaRS" id="MED8">
    <property type="organism name" value="human"/>
</dbReference>
<dbReference type="GeneWiki" id="MED8"/>
<dbReference type="GenomeRNAi" id="112950"/>
<dbReference type="Pharos" id="Q96G25">
    <property type="development level" value="Tbio"/>
</dbReference>
<dbReference type="PRO" id="PR:Q96G25"/>
<dbReference type="Proteomes" id="UP000005640">
    <property type="component" value="Chromosome 1"/>
</dbReference>
<dbReference type="RNAct" id="Q96G25">
    <property type="molecule type" value="protein"/>
</dbReference>
<dbReference type="Bgee" id="ENSG00000159479">
    <property type="expression patterns" value="Expressed in oocyte and 203 other cell types or tissues"/>
</dbReference>
<dbReference type="GO" id="GO:0070847">
    <property type="term" value="C:core mediator complex"/>
    <property type="evidence" value="ECO:0000353"/>
    <property type="project" value="ComplexPortal"/>
</dbReference>
<dbReference type="GO" id="GO:0016592">
    <property type="term" value="C:mediator complex"/>
    <property type="evidence" value="ECO:0000314"/>
    <property type="project" value="MGI"/>
</dbReference>
<dbReference type="GO" id="GO:0005654">
    <property type="term" value="C:nucleoplasm"/>
    <property type="evidence" value="ECO:0000304"/>
    <property type="project" value="Reactome"/>
</dbReference>
<dbReference type="GO" id="GO:0005634">
    <property type="term" value="C:nucleus"/>
    <property type="evidence" value="ECO:0000314"/>
    <property type="project" value="ComplexPortal"/>
</dbReference>
<dbReference type="GO" id="GO:0000151">
    <property type="term" value="C:ubiquitin ligase complex"/>
    <property type="evidence" value="ECO:0007669"/>
    <property type="project" value="Ensembl"/>
</dbReference>
<dbReference type="GO" id="GO:0000978">
    <property type="term" value="F:RNA polymerase II cis-regulatory region sequence-specific DNA binding"/>
    <property type="evidence" value="ECO:0000318"/>
    <property type="project" value="GO_Central"/>
</dbReference>
<dbReference type="GO" id="GO:0003712">
    <property type="term" value="F:transcription coregulator activity"/>
    <property type="evidence" value="ECO:0000318"/>
    <property type="project" value="GO_Central"/>
</dbReference>
<dbReference type="GO" id="GO:0061630">
    <property type="term" value="F:ubiquitin protein ligase activity"/>
    <property type="evidence" value="ECO:0007669"/>
    <property type="project" value="Ensembl"/>
</dbReference>
<dbReference type="GO" id="GO:0032968">
    <property type="term" value="P:positive regulation of transcription elongation by RNA polymerase II"/>
    <property type="evidence" value="ECO:0000303"/>
    <property type="project" value="ComplexPortal"/>
</dbReference>
<dbReference type="GO" id="GO:0060261">
    <property type="term" value="P:positive regulation of transcription initiation by RNA polymerase II"/>
    <property type="evidence" value="ECO:0000303"/>
    <property type="project" value="ComplexPortal"/>
</dbReference>
<dbReference type="GO" id="GO:0016567">
    <property type="term" value="P:protein ubiquitination"/>
    <property type="evidence" value="ECO:0007669"/>
    <property type="project" value="UniProtKB-UniPathway"/>
</dbReference>
<dbReference type="GO" id="GO:0006357">
    <property type="term" value="P:regulation of transcription by RNA polymerase II"/>
    <property type="evidence" value="ECO:0000318"/>
    <property type="project" value="GO_Central"/>
</dbReference>
<dbReference type="GO" id="GO:0051123">
    <property type="term" value="P:RNA polymerase II preinitiation complex assembly"/>
    <property type="evidence" value="ECO:0000303"/>
    <property type="project" value="ComplexPortal"/>
</dbReference>
<dbReference type="InterPro" id="IPR019364">
    <property type="entry name" value="Mediatior_Med8_fun/met"/>
</dbReference>
<dbReference type="PANTHER" id="PTHR13074">
    <property type="entry name" value="MEDIATOR OF RNA POLYMERASE II TRANSCRIPTION SUBUNIT 8"/>
    <property type="match status" value="1"/>
</dbReference>
<dbReference type="PANTHER" id="PTHR13074:SF9">
    <property type="entry name" value="MEDIATOR OF RNA POLYMERASE II TRANSCRIPTION SUBUNIT 8"/>
    <property type="match status" value="1"/>
</dbReference>
<dbReference type="Pfam" id="PF10232">
    <property type="entry name" value="Med8"/>
    <property type="match status" value="1"/>
</dbReference>
<gene>
    <name type="primary">MED8</name>
</gene>